<dbReference type="EC" id="2.3.2.29" evidence="1"/>
<dbReference type="EMBL" id="BA000037">
    <property type="protein sequence ID" value="BAC95084.1"/>
    <property type="status" value="ALT_INIT"/>
    <property type="molecule type" value="Genomic_DNA"/>
</dbReference>
<dbReference type="RefSeq" id="WP_043877272.1">
    <property type="nucleotide sequence ID" value="NC_005139.1"/>
</dbReference>
<dbReference type="SMR" id="Q7MJ43"/>
<dbReference type="STRING" id="672.VV93_v1c20300"/>
<dbReference type="KEGG" id="vvy:VV2320"/>
<dbReference type="eggNOG" id="COG2935">
    <property type="taxonomic scope" value="Bacteria"/>
</dbReference>
<dbReference type="HOGENOM" id="CLU_077607_0_0_6"/>
<dbReference type="Proteomes" id="UP000002675">
    <property type="component" value="Chromosome I"/>
</dbReference>
<dbReference type="GO" id="GO:0005737">
    <property type="term" value="C:cytoplasm"/>
    <property type="evidence" value="ECO:0007669"/>
    <property type="project" value="UniProtKB-SubCell"/>
</dbReference>
<dbReference type="GO" id="GO:0004057">
    <property type="term" value="F:arginyl-tRNA--protein transferase activity"/>
    <property type="evidence" value="ECO:0007669"/>
    <property type="project" value="InterPro"/>
</dbReference>
<dbReference type="GO" id="GO:0008914">
    <property type="term" value="F:leucyl-tRNA--protein transferase activity"/>
    <property type="evidence" value="ECO:0007669"/>
    <property type="project" value="UniProtKB-UniRule"/>
</dbReference>
<dbReference type="GO" id="GO:0071596">
    <property type="term" value="P:ubiquitin-dependent protein catabolic process via the N-end rule pathway"/>
    <property type="evidence" value="ECO:0007669"/>
    <property type="project" value="InterPro"/>
</dbReference>
<dbReference type="HAMAP" id="MF_00689">
    <property type="entry name" value="Bpt"/>
    <property type="match status" value="1"/>
</dbReference>
<dbReference type="InterPro" id="IPR016181">
    <property type="entry name" value="Acyl_CoA_acyltransferase"/>
</dbReference>
<dbReference type="InterPro" id="IPR017138">
    <property type="entry name" value="Asp_Glu_LeuTrfase"/>
</dbReference>
<dbReference type="InterPro" id="IPR030700">
    <property type="entry name" value="N-end_Aminoacyl_Trfase"/>
</dbReference>
<dbReference type="InterPro" id="IPR007472">
    <property type="entry name" value="N-end_Aminoacyl_Trfase_C"/>
</dbReference>
<dbReference type="InterPro" id="IPR007471">
    <property type="entry name" value="N-end_Aminoacyl_Trfase_N"/>
</dbReference>
<dbReference type="NCBIfam" id="NF002342">
    <property type="entry name" value="PRK01305.1-3"/>
    <property type="match status" value="1"/>
</dbReference>
<dbReference type="NCBIfam" id="NF002345">
    <property type="entry name" value="PRK01305.2-2"/>
    <property type="match status" value="1"/>
</dbReference>
<dbReference type="NCBIfam" id="NF002346">
    <property type="entry name" value="PRK01305.2-3"/>
    <property type="match status" value="1"/>
</dbReference>
<dbReference type="PANTHER" id="PTHR21367">
    <property type="entry name" value="ARGININE-TRNA-PROTEIN TRANSFERASE 1"/>
    <property type="match status" value="1"/>
</dbReference>
<dbReference type="PANTHER" id="PTHR21367:SF1">
    <property type="entry name" value="ARGINYL-TRNA--PROTEIN TRANSFERASE 1"/>
    <property type="match status" value="1"/>
</dbReference>
<dbReference type="Pfam" id="PF04377">
    <property type="entry name" value="ATE_C"/>
    <property type="match status" value="1"/>
</dbReference>
<dbReference type="Pfam" id="PF04376">
    <property type="entry name" value="ATE_N"/>
    <property type="match status" value="1"/>
</dbReference>
<dbReference type="PIRSF" id="PIRSF037208">
    <property type="entry name" value="ATE_pro_prd"/>
    <property type="match status" value="1"/>
</dbReference>
<dbReference type="SUPFAM" id="SSF55729">
    <property type="entry name" value="Acyl-CoA N-acyltransferases (Nat)"/>
    <property type="match status" value="1"/>
</dbReference>
<comment type="function">
    <text evidence="1">Functions in the N-end rule pathway of protein degradation where it conjugates Leu from its aminoacyl-tRNA to the N-termini of proteins containing an N-terminal aspartate or glutamate.</text>
</comment>
<comment type="catalytic activity">
    <reaction evidence="1">
        <text>N-terminal L-glutamyl-[protein] + L-leucyl-tRNA(Leu) = N-terminal L-leucyl-L-glutamyl-[protein] + tRNA(Leu) + H(+)</text>
        <dbReference type="Rhea" id="RHEA:50412"/>
        <dbReference type="Rhea" id="RHEA-COMP:9613"/>
        <dbReference type="Rhea" id="RHEA-COMP:9622"/>
        <dbReference type="Rhea" id="RHEA-COMP:12664"/>
        <dbReference type="Rhea" id="RHEA-COMP:12668"/>
        <dbReference type="ChEBI" id="CHEBI:15378"/>
        <dbReference type="ChEBI" id="CHEBI:64721"/>
        <dbReference type="ChEBI" id="CHEBI:78442"/>
        <dbReference type="ChEBI" id="CHEBI:78494"/>
        <dbReference type="ChEBI" id="CHEBI:133041"/>
        <dbReference type="EC" id="2.3.2.29"/>
    </reaction>
</comment>
<comment type="catalytic activity">
    <reaction evidence="1">
        <text>N-terminal L-aspartyl-[protein] + L-leucyl-tRNA(Leu) = N-terminal L-leucyl-L-aspartyl-[protein] + tRNA(Leu) + H(+)</text>
        <dbReference type="Rhea" id="RHEA:50420"/>
        <dbReference type="Rhea" id="RHEA-COMP:9613"/>
        <dbReference type="Rhea" id="RHEA-COMP:9622"/>
        <dbReference type="Rhea" id="RHEA-COMP:12669"/>
        <dbReference type="Rhea" id="RHEA-COMP:12674"/>
        <dbReference type="ChEBI" id="CHEBI:15378"/>
        <dbReference type="ChEBI" id="CHEBI:64720"/>
        <dbReference type="ChEBI" id="CHEBI:78442"/>
        <dbReference type="ChEBI" id="CHEBI:78494"/>
        <dbReference type="ChEBI" id="CHEBI:133042"/>
        <dbReference type="EC" id="2.3.2.29"/>
    </reaction>
</comment>
<comment type="subcellular location">
    <subcellularLocation>
        <location evidence="1">Cytoplasm</location>
    </subcellularLocation>
</comment>
<comment type="similarity">
    <text evidence="1">Belongs to the R-transferase family. Bpt subfamily.</text>
</comment>
<comment type="sequence caution" evidence="2">
    <conflict type="erroneous initiation">
        <sequence resource="EMBL-CDS" id="BAC95084"/>
    </conflict>
</comment>
<name>BPT_VIBVY</name>
<protein>
    <recommendedName>
        <fullName evidence="1">Aspartate/glutamate leucyltransferase</fullName>
        <ecNumber evidence="1">2.3.2.29</ecNumber>
    </recommendedName>
</protein>
<organism>
    <name type="scientific">Vibrio vulnificus (strain YJ016)</name>
    <dbReference type="NCBI Taxonomy" id="196600"/>
    <lineage>
        <taxon>Bacteria</taxon>
        <taxon>Pseudomonadati</taxon>
        <taxon>Pseudomonadota</taxon>
        <taxon>Gammaproteobacteria</taxon>
        <taxon>Vibrionales</taxon>
        <taxon>Vibrionaceae</taxon>
        <taxon>Vibrio</taxon>
    </lineage>
</organism>
<feature type="chain" id="PRO_0000195119" description="Aspartate/glutamate leucyltransferase">
    <location>
        <begin position="1"/>
        <end position="232"/>
    </location>
</feature>
<sequence length="232" mass="27394">MSSDIHQIKIGLTDNHPCSYLPERKERVAVALEADMHTADNYEVLLANGFRRSGNTIYKPHCDSCHSCQPIRISVPDIELSRSQKRLLAKARSLSWSMKRNMDENWFDLYSRYIVARHRNGTMYPPKKDDFAHFSRNQWLTTQFLHIYEGQRLIAVAVTDIMDHCASAFYTFFEPEHELSLGTLAVLFQLEYCQEEKKQWLYLGYQIDECPAMNYKVRFHRHQKLVNQRWQG</sequence>
<accession>Q7MJ43</accession>
<gene>
    <name evidence="1" type="primary">bpt</name>
    <name type="ordered locus">VV2320</name>
</gene>
<keyword id="KW-0012">Acyltransferase</keyword>
<keyword id="KW-0963">Cytoplasm</keyword>
<keyword id="KW-0808">Transferase</keyword>
<evidence type="ECO:0000255" key="1">
    <source>
        <dbReference type="HAMAP-Rule" id="MF_00689"/>
    </source>
</evidence>
<evidence type="ECO:0000305" key="2"/>
<reference key="1">
    <citation type="journal article" date="2003" name="Genome Res.">
        <title>Comparative genome analysis of Vibrio vulnificus, a marine pathogen.</title>
        <authorList>
            <person name="Chen C.-Y."/>
            <person name="Wu K.-M."/>
            <person name="Chang Y.-C."/>
            <person name="Chang C.-H."/>
            <person name="Tsai H.-C."/>
            <person name="Liao T.-L."/>
            <person name="Liu Y.-M."/>
            <person name="Chen H.-J."/>
            <person name="Shen A.B.-T."/>
            <person name="Li J.-C."/>
            <person name="Su T.-L."/>
            <person name="Shao C.-P."/>
            <person name="Lee C.-T."/>
            <person name="Hor L.-I."/>
            <person name="Tsai S.-F."/>
        </authorList>
    </citation>
    <scope>NUCLEOTIDE SEQUENCE [LARGE SCALE GENOMIC DNA]</scope>
    <source>
        <strain>YJ016</strain>
    </source>
</reference>
<proteinExistence type="inferred from homology"/>